<proteinExistence type="inferred from homology"/>
<protein>
    <recommendedName>
        <fullName>Carbamate kinase</fullName>
        <ecNumber>2.7.2.2</ecNumber>
    </recommendedName>
</protein>
<feature type="chain" id="PRO_0000185140" description="Carbamate kinase">
    <location>
        <begin position="1"/>
        <end position="310"/>
    </location>
</feature>
<comment type="catalytic activity">
    <reaction>
        <text>hydrogencarbonate + NH4(+) + ATP = carbamoyl phosphate + ADP + H2O + H(+)</text>
        <dbReference type="Rhea" id="RHEA:10152"/>
        <dbReference type="ChEBI" id="CHEBI:15377"/>
        <dbReference type="ChEBI" id="CHEBI:15378"/>
        <dbReference type="ChEBI" id="CHEBI:17544"/>
        <dbReference type="ChEBI" id="CHEBI:28938"/>
        <dbReference type="ChEBI" id="CHEBI:30616"/>
        <dbReference type="ChEBI" id="CHEBI:58228"/>
        <dbReference type="ChEBI" id="CHEBI:456216"/>
        <dbReference type="EC" id="2.7.2.2"/>
    </reaction>
</comment>
<comment type="pathway">
    <text>Metabolic intermediate metabolism; carbamoyl phosphate degradation; CO(2) and NH(3) from carbamoyl phosphate: step 1/1.</text>
</comment>
<comment type="subcellular location">
    <subcellularLocation>
        <location evidence="1">Cytoplasm</location>
    </subcellularLocation>
</comment>
<comment type="similarity">
    <text evidence="1">Belongs to the carbamate kinase family.</text>
</comment>
<reference key="1">
    <citation type="journal article" date="2005" name="J. Bacteriol.">
        <title>Insights on evolution of virulence and resistance from the complete genome analysis of an early methicillin-resistant Staphylococcus aureus strain and a biofilm-producing methicillin-resistant Staphylococcus epidermidis strain.</title>
        <authorList>
            <person name="Gill S.R."/>
            <person name="Fouts D.E."/>
            <person name="Archer G.L."/>
            <person name="Mongodin E.F."/>
            <person name="DeBoy R.T."/>
            <person name="Ravel J."/>
            <person name="Paulsen I.T."/>
            <person name="Kolonay J.F."/>
            <person name="Brinkac L.M."/>
            <person name="Beanan M.J."/>
            <person name="Dodson R.J."/>
            <person name="Daugherty S.C."/>
            <person name="Madupu R."/>
            <person name="Angiuoli S.V."/>
            <person name="Durkin A.S."/>
            <person name="Haft D.H."/>
            <person name="Vamathevan J.J."/>
            <person name="Khouri H."/>
            <person name="Utterback T.R."/>
            <person name="Lee C."/>
            <person name="Dimitrov G."/>
            <person name="Jiang L."/>
            <person name="Qin H."/>
            <person name="Weidman J."/>
            <person name="Tran K."/>
            <person name="Kang K.H."/>
            <person name="Hance I.R."/>
            <person name="Nelson K.E."/>
            <person name="Fraser C.M."/>
        </authorList>
    </citation>
    <scope>NUCLEOTIDE SEQUENCE [LARGE SCALE GENOMIC DNA]</scope>
    <source>
        <strain>ATCC 35984 / DSM 28319 / BCRC 17069 / CCUG 31568 / BM 3577 / RP62A</strain>
    </source>
</reference>
<dbReference type="EC" id="2.7.2.2"/>
<dbReference type="EMBL" id="CP000029">
    <property type="protein sequence ID" value="AAW53149.1"/>
    <property type="molecule type" value="Genomic_DNA"/>
</dbReference>
<dbReference type="RefSeq" id="WP_001830533.1">
    <property type="nucleotide sequence ID" value="NC_002976.3"/>
</dbReference>
<dbReference type="SMR" id="Q5HKJ3"/>
<dbReference type="STRING" id="176279.SERP2352"/>
<dbReference type="GeneID" id="50017624"/>
<dbReference type="KEGG" id="ser:SERP2352"/>
<dbReference type="eggNOG" id="COG0549">
    <property type="taxonomic scope" value="Bacteria"/>
</dbReference>
<dbReference type="HOGENOM" id="CLU_076278_0_0_9"/>
<dbReference type="UniPathway" id="UPA00996">
    <property type="reaction ID" value="UER00366"/>
</dbReference>
<dbReference type="Proteomes" id="UP000000531">
    <property type="component" value="Chromosome"/>
</dbReference>
<dbReference type="GO" id="GO:0005829">
    <property type="term" value="C:cytosol"/>
    <property type="evidence" value="ECO:0007669"/>
    <property type="project" value="TreeGrafter"/>
</dbReference>
<dbReference type="GO" id="GO:0005524">
    <property type="term" value="F:ATP binding"/>
    <property type="evidence" value="ECO:0007669"/>
    <property type="project" value="UniProtKB-KW"/>
</dbReference>
<dbReference type="GO" id="GO:0008804">
    <property type="term" value="F:carbamate kinase activity"/>
    <property type="evidence" value="ECO:0007669"/>
    <property type="project" value="UniProtKB-EC"/>
</dbReference>
<dbReference type="GO" id="GO:0019546">
    <property type="term" value="P:arginine deiminase pathway"/>
    <property type="evidence" value="ECO:0007669"/>
    <property type="project" value="TreeGrafter"/>
</dbReference>
<dbReference type="CDD" id="cd04235">
    <property type="entry name" value="AAK_CK"/>
    <property type="match status" value="1"/>
</dbReference>
<dbReference type="FunFam" id="3.40.1160.10:FF:000007">
    <property type="entry name" value="Carbamate kinase"/>
    <property type="match status" value="1"/>
</dbReference>
<dbReference type="Gene3D" id="3.40.1160.10">
    <property type="entry name" value="Acetylglutamate kinase-like"/>
    <property type="match status" value="1"/>
</dbReference>
<dbReference type="InterPro" id="IPR036393">
    <property type="entry name" value="AceGlu_kinase-like_sf"/>
</dbReference>
<dbReference type="InterPro" id="IPR001048">
    <property type="entry name" value="Asp/Glu/Uridylate_kinase"/>
</dbReference>
<dbReference type="InterPro" id="IPR003964">
    <property type="entry name" value="Carb_kinase"/>
</dbReference>
<dbReference type="NCBIfam" id="TIGR00746">
    <property type="entry name" value="arcC"/>
    <property type="match status" value="1"/>
</dbReference>
<dbReference type="NCBIfam" id="NF009007">
    <property type="entry name" value="PRK12352.1"/>
    <property type="match status" value="1"/>
</dbReference>
<dbReference type="PANTHER" id="PTHR30409">
    <property type="entry name" value="CARBAMATE KINASE"/>
    <property type="match status" value="1"/>
</dbReference>
<dbReference type="PANTHER" id="PTHR30409:SF1">
    <property type="entry name" value="CARBAMATE KINASE-RELATED"/>
    <property type="match status" value="1"/>
</dbReference>
<dbReference type="Pfam" id="PF00696">
    <property type="entry name" value="AA_kinase"/>
    <property type="match status" value="1"/>
</dbReference>
<dbReference type="PIRSF" id="PIRSF000723">
    <property type="entry name" value="Carbamate_kin"/>
    <property type="match status" value="1"/>
</dbReference>
<dbReference type="PRINTS" id="PR01469">
    <property type="entry name" value="CARBMTKINASE"/>
</dbReference>
<dbReference type="SUPFAM" id="SSF53633">
    <property type="entry name" value="Carbamate kinase-like"/>
    <property type="match status" value="1"/>
</dbReference>
<sequence>MAKIVVALGGNALGKSPQEQLELVKNTAKSLVGLITKGHEIVISHGNGPQVGSINLGLNYAAEHDQGPAFPFAECGAMSQAYIGYQLQESLQNELHSMGIDKQVVTLVTQVEVDEGDPAFNSPSKPIGLFYTKEEANRIQQEKGYQFVEDAGRGYRRVVPSPQPISIIELESIKTLVENDTLVIAAGGGGIPVIREQHDSFKGIDAVIDKDKTSALLGADIHCDQLIILTAIDYVYINYHTDQQQALKTTNIDTLKTYIEEEQFAKGSMLPKIESAISFIENNPNGSVLITSLNQLDAALEGKIGTLITK</sequence>
<name>ARCC_STAEQ</name>
<organism>
    <name type="scientific">Staphylococcus epidermidis (strain ATCC 35984 / DSM 28319 / BCRC 17069 / CCUG 31568 / BM 3577 / RP62A)</name>
    <dbReference type="NCBI Taxonomy" id="176279"/>
    <lineage>
        <taxon>Bacteria</taxon>
        <taxon>Bacillati</taxon>
        <taxon>Bacillota</taxon>
        <taxon>Bacilli</taxon>
        <taxon>Bacillales</taxon>
        <taxon>Staphylococcaceae</taxon>
        <taxon>Staphylococcus</taxon>
    </lineage>
</organism>
<gene>
    <name type="primary">arcC</name>
    <name type="ordered locus">SERP2352</name>
</gene>
<keyword id="KW-0056">Arginine metabolism</keyword>
<keyword id="KW-0067">ATP-binding</keyword>
<keyword id="KW-0963">Cytoplasm</keyword>
<keyword id="KW-0418">Kinase</keyword>
<keyword id="KW-0547">Nucleotide-binding</keyword>
<keyword id="KW-1185">Reference proteome</keyword>
<keyword id="KW-0808">Transferase</keyword>
<evidence type="ECO:0000305" key="1"/>
<accession>Q5HKJ3</accession>